<keyword id="KW-0119">Carbohydrate metabolism</keyword>
<keyword id="KW-0325">Glycoprotein</keyword>
<keyword id="KW-0326">Glycosidase</keyword>
<keyword id="KW-0378">Hydrolase</keyword>
<keyword id="KW-0460">Magnesium</keyword>
<keyword id="KW-0520">NAD</keyword>
<keyword id="KW-0624">Polysaccharide degradation</keyword>
<keyword id="KW-1185">Reference proteome</keyword>
<keyword id="KW-0964">Secreted</keyword>
<proteinExistence type="evidence at transcript level"/>
<accession>Q5ARP5</accession>
<accession>C8VKR4</accession>
<accession>Q1HFQ4</accession>
<gene>
    <name type="primary">aglG</name>
    <name type="ORF">AN9035</name>
</gene>
<sequence length="726" mass="80682">MTNSKARYVLEPVQVTGTTFALNGTTLSYQFHVDEPSADLRSDHFGGSISGPIPVDPEPIVDGWTGMPDRVRREFPDQGRGDFRVPAFRIRQAEGHTVSAFRYREHEIVPGKEVSASGLPGVFGDAHDATTLIVRLVDPYSDLAAELKYTVFPKYDTVVRSASITNKSNSDVTIESLASLSVDFPFDELEMIGLRGDWAREAHRLRRKVDYGVQSFGSTTGFSSHLHNPFVALVHPSTTESQGEAWGFSLIYSGSFTINVEKSSQGLTRVSIGPSQLSWTLKPGETFDSPECVAVYSSTGIGGMSRSLHGLYRKHLMKSKFATEDRPVLLNSWEGLYFHIDQDRMYRLAQEAAALGVKLLVMDDGWFGDEHPRTSDDAGLGDWIPNPARFPDGLTPLVNRITALKVANSQRNMRFGIWVEPEMVNPRSTLYQQHPDWVLHAGNYPRTEQRNQLVLNMSLPEVQEFIISAMSEILNAADITYVKWDHNRGLAETPSPCANHAYMLGAYRVFDVLTTRFPNVIWEGCASGGGRFDPGILQYFPQVWTSDDSDAVERIFIQFGTSLAYPASAMGGHISSVPNHQTGRTTPLTFRAHVAMMCGSFGLELDPAHLTDSERRDIPGLIALAEKISPIVVKGDLWRLALPEDSNWPAALFLSENRTQGVLFFFQLAPMVNHSLPRVRLQGLEDGALYRVDGEGPYSGSMLMNLGLQYSFRGDYGSRLAFIERE</sequence>
<reference key="1">
    <citation type="journal article" date="2006" name="Proc. Natl. Acad. Sci. U.S.A.">
        <title>Development and application of a suite of polysaccharide-degrading enzymes for analyzing plant cell walls.</title>
        <authorList>
            <person name="Bauer S."/>
            <person name="Vasu P."/>
            <person name="Persson S."/>
            <person name="Mort A.J."/>
            <person name="Somerville C.R."/>
        </authorList>
    </citation>
    <scope>NUCLEOTIDE SEQUENCE [MRNA]</scope>
    <source>
        <strain>FGSC A4 / ATCC 38163 / CBS 112.46 / NRRL 194 / M139</strain>
    </source>
</reference>
<reference key="2">
    <citation type="journal article" date="2005" name="Nature">
        <title>Sequencing of Aspergillus nidulans and comparative analysis with A. fumigatus and A. oryzae.</title>
        <authorList>
            <person name="Galagan J.E."/>
            <person name="Calvo S.E."/>
            <person name="Cuomo C."/>
            <person name="Ma L.-J."/>
            <person name="Wortman J.R."/>
            <person name="Batzoglou S."/>
            <person name="Lee S.-I."/>
            <person name="Bastuerkmen M."/>
            <person name="Spevak C.C."/>
            <person name="Clutterbuck J."/>
            <person name="Kapitonov V."/>
            <person name="Jurka J."/>
            <person name="Scazzocchio C."/>
            <person name="Farman M.L."/>
            <person name="Butler J."/>
            <person name="Purcell S."/>
            <person name="Harris S."/>
            <person name="Braus G.H."/>
            <person name="Draht O."/>
            <person name="Busch S."/>
            <person name="D'Enfert C."/>
            <person name="Bouchier C."/>
            <person name="Goldman G.H."/>
            <person name="Bell-Pedersen D."/>
            <person name="Griffiths-Jones S."/>
            <person name="Doonan J.H."/>
            <person name="Yu J."/>
            <person name="Vienken K."/>
            <person name="Pain A."/>
            <person name="Freitag M."/>
            <person name="Selker E.U."/>
            <person name="Archer D.B."/>
            <person name="Penalva M.A."/>
            <person name="Oakley B.R."/>
            <person name="Momany M."/>
            <person name="Tanaka T."/>
            <person name="Kumagai T."/>
            <person name="Asai K."/>
            <person name="Machida M."/>
            <person name="Nierman W.C."/>
            <person name="Denning D.W."/>
            <person name="Caddick M.X."/>
            <person name="Hynes M."/>
            <person name="Paoletti M."/>
            <person name="Fischer R."/>
            <person name="Miller B.L."/>
            <person name="Dyer P.S."/>
            <person name="Sachs M.S."/>
            <person name="Osmani S.A."/>
            <person name="Birren B.W."/>
        </authorList>
    </citation>
    <scope>NUCLEOTIDE SEQUENCE [LARGE SCALE GENOMIC DNA]</scope>
    <source>
        <strain>FGSC A4 / ATCC 38163 / CBS 112.46 / NRRL 194 / M139</strain>
    </source>
</reference>
<reference key="3">
    <citation type="journal article" date="2009" name="Fungal Genet. Biol.">
        <title>The 2008 update of the Aspergillus nidulans genome annotation: a community effort.</title>
        <authorList>
            <person name="Wortman J.R."/>
            <person name="Gilsenan J.M."/>
            <person name="Joardar V."/>
            <person name="Deegan J."/>
            <person name="Clutterbuck J."/>
            <person name="Andersen M.R."/>
            <person name="Archer D."/>
            <person name="Bencina M."/>
            <person name="Braus G."/>
            <person name="Coutinho P."/>
            <person name="von Dohren H."/>
            <person name="Doonan J."/>
            <person name="Driessen A.J."/>
            <person name="Durek P."/>
            <person name="Espeso E."/>
            <person name="Fekete E."/>
            <person name="Flipphi M."/>
            <person name="Estrada C.G."/>
            <person name="Geysens S."/>
            <person name="Goldman G."/>
            <person name="de Groot P.W."/>
            <person name="Hansen K."/>
            <person name="Harris S.D."/>
            <person name="Heinekamp T."/>
            <person name="Helmstaedt K."/>
            <person name="Henrissat B."/>
            <person name="Hofmann G."/>
            <person name="Homan T."/>
            <person name="Horio T."/>
            <person name="Horiuchi H."/>
            <person name="James S."/>
            <person name="Jones M."/>
            <person name="Karaffa L."/>
            <person name="Karanyi Z."/>
            <person name="Kato M."/>
            <person name="Keller N."/>
            <person name="Kelly D.E."/>
            <person name="Kiel J.A."/>
            <person name="Kim J.M."/>
            <person name="van der Klei I.J."/>
            <person name="Klis F.M."/>
            <person name="Kovalchuk A."/>
            <person name="Krasevec N."/>
            <person name="Kubicek C.P."/>
            <person name="Liu B."/>
            <person name="Maccabe A."/>
            <person name="Meyer V."/>
            <person name="Mirabito P."/>
            <person name="Miskei M."/>
            <person name="Mos M."/>
            <person name="Mullins J."/>
            <person name="Nelson D.R."/>
            <person name="Nielsen J."/>
            <person name="Oakley B.R."/>
            <person name="Osmani S.A."/>
            <person name="Pakula T."/>
            <person name="Paszewski A."/>
            <person name="Paulsen I."/>
            <person name="Pilsyk S."/>
            <person name="Pocsi I."/>
            <person name="Punt P.J."/>
            <person name="Ram A.F."/>
            <person name="Ren Q."/>
            <person name="Robellet X."/>
            <person name="Robson G."/>
            <person name="Seiboth B."/>
            <person name="van Solingen P."/>
            <person name="Specht T."/>
            <person name="Sun J."/>
            <person name="Taheri-Talesh N."/>
            <person name="Takeshita N."/>
            <person name="Ussery D."/>
            <person name="vanKuyk P.A."/>
            <person name="Visser H."/>
            <person name="van de Vondervoort P.J."/>
            <person name="de Vries R.P."/>
            <person name="Walton J."/>
            <person name="Xiang X."/>
            <person name="Xiong Y."/>
            <person name="Zeng A.P."/>
            <person name="Brandt B.W."/>
            <person name="Cornell M.J."/>
            <person name="van den Hondel C.A."/>
            <person name="Visser J."/>
            <person name="Oliver S.G."/>
            <person name="Turner G."/>
        </authorList>
    </citation>
    <scope>GENOME REANNOTATION</scope>
    <source>
        <strain>FGSC A4 / ATCC 38163 / CBS 112.46 / NRRL 194 / M139</strain>
    </source>
</reference>
<feature type="chain" id="PRO_0000395069" description="Probable alpha-galactosidase G">
    <location>
        <begin position="1"/>
        <end position="726"/>
    </location>
</feature>
<feature type="active site" description="Nucleophile" evidence="2">
    <location>
        <position position="485"/>
    </location>
</feature>
<feature type="active site" description="Proton donor" evidence="2">
    <location>
        <position position="547"/>
    </location>
</feature>
<feature type="glycosylation site" description="N-linked (GlcNAc...) asparagine" evidence="3">
    <location>
        <position position="23"/>
    </location>
</feature>
<feature type="glycosylation site" description="N-linked (GlcNAc...) asparagine" evidence="3">
    <location>
        <position position="166"/>
    </location>
</feature>
<feature type="glycosylation site" description="N-linked (GlcNAc...) asparagine" evidence="3">
    <location>
        <position position="456"/>
    </location>
</feature>
<feature type="glycosylation site" description="N-linked (GlcNAc...) asparagine" evidence="3">
    <location>
        <position position="657"/>
    </location>
</feature>
<feature type="glycosylation site" description="N-linked (GlcNAc...) asparagine" evidence="3">
    <location>
        <position position="673"/>
    </location>
</feature>
<dbReference type="EC" id="3.2.1.22"/>
<dbReference type="EMBL" id="DQ490520">
    <property type="protein sequence ID" value="ABF50896.1"/>
    <property type="molecule type" value="mRNA"/>
</dbReference>
<dbReference type="EMBL" id="AACD01000168">
    <property type="protein sequence ID" value="EAA64367.1"/>
    <property type="molecule type" value="Genomic_DNA"/>
</dbReference>
<dbReference type="EMBL" id="BN001307">
    <property type="protein sequence ID" value="CBF84419.1"/>
    <property type="molecule type" value="Genomic_DNA"/>
</dbReference>
<dbReference type="RefSeq" id="XP_682304.1">
    <property type="nucleotide sequence ID" value="XM_677212.1"/>
</dbReference>
<dbReference type="SMR" id="Q5ARP5"/>
<dbReference type="STRING" id="227321.Q5ARP5"/>
<dbReference type="CAZy" id="GH36">
    <property type="family name" value="Glycoside Hydrolase Family 36"/>
</dbReference>
<dbReference type="GlyCosmos" id="Q5ARP5">
    <property type="glycosylation" value="5 sites, No reported glycans"/>
</dbReference>
<dbReference type="EnsemblFungi" id="CBF84419">
    <property type="protein sequence ID" value="CBF84419"/>
    <property type="gene ID" value="ANIA_09035"/>
</dbReference>
<dbReference type="KEGG" id="ani:ANIA_09035"/>
<dbReference type="VEuPathDB" id="FungiDB:AN9035"/>
<dbReference type="eggNOG" id="ENOG502QWG1">
    <property type="taxonomic scope" value="Eukaryota"/>
</dbReference>
<dbReference type="HOGENOM" id="CLU_009640_2_1_1"/>
<dbReference type="InParanoid" id="Q5ARP5"/>
<dbReference type="OMA" id="IHPARVM"/>
<dbReference type="OrthoDB" id="5795902at2759"/>
<dbReference type="Proteomes" id="UP000000560">
    <property type="component" value="Chromosome VII"/>
</dbReference>
<dbReference type="GO" id="GO:0005576">
    <property type="term" value="C:extracellular region"/>
    <property type="evidence" value="ECO:0007669"/>
    <property type="project" value="UniProtKB-SubCell"/>
</dbReference>
<dbReference type="GO" id="GO:0004557">
    <property type="term" value="F:alpha-galactosidase activity"/>
    <property type="evidence" value="ECO:0000318"/>
    <property type="project" value="GO_Central"/>
</dbReference>
<dbReference type="GO" id="GO:0000272">
    <property type="term" value="P:polysaccharide catabolic process"/>
    <property type="evidence" value="ECO:0007669"/>
    <property type="project" value="UniProtKB-KW"/>
</dbReference>
<dbReference type="CDD" id="cd14791">
    <property type="entry name" value="GH36"/>
    <property type="match status" value="1"/>
</dbReference>
<dbReference type="FunFam" id="3.20.20.70:FF:000118">
    <property type="entry name" value="Alpha-galactosidase"/>
    <property type="match status" value="1"/>
</dbReference>
<dbReference type="Gene3D" id="3.20.20.70">
    <property type="entry name" value="Aldolase class I"/>
    <property type="match status" value="1"/>
</dbReference>
<dbReference type="Gene3D" id="2.70.98.60">
    <property type="entry name" value="alpha-galactosidase from lactobacil brevis"/>
    <property type="match status" value="1"/>
</dbReference>
<dbReference type="Gene3D" id="2.60.40.1180">
    <property type="entry name" value="Golgi alpha-mannosidase II"/>
    <property type="match status" value="1"/>
</dbReference>
<dbReference type="InterPro" id="IPR013785">
    <property type="entry name" value="Aldolase_TIM"/>
</dbReference>
<dbReference type="InterPro" id="IPR038417">
    <property type="entry name" value="Alpga-gal_N_sf"/>
</dbReference>
<dbReference type="InterPro" id="IPR050985">
    <property type="entry name" value="Alpha-glycosidase_related"/>
</dbReference>
<dbReference type="InterPro" id="IPR002252">
    <property type="entry name" value="Glyco_hydro_36"/>
</dbReference>
<dbReference type="InterPro" id="IPR031705">
    <property type="entry name" value="Glyco_hydro_36_C"/>
</dbReference>
<dbReference type="InterPro" id="IPR031704">
    <property type="entry name" value="Glyco_hydro_36_N"/>
</dbReference>
<dbReference type="InterPro" id="IPR013780">
    <property type="entry name" value="Glyco_hydro_b"/>
</dbReference>
<dbReference type="InterPro" id="IPR017853">
    <property type="entry name" value="Glycoside_hydrolase_SF"/>
</dbReference>
<dbReference type="PANTHER" id="PTHR43053:SF3">
    <property type="entry name" value="ALPHA-GALACTOSIDASE C-RELATED"/>
    <property type="match status" value="1"/>
</dbReference>
<dbReference type="PANTHER" id="PTHR43053">
    <property type="entry name" value="GLYCOSIDASE FAMILY 31"/>
    <property type="match status" value="1"/>
</dbReference>
<dbReference type="Pfam" id="PF16874">
    <property type="entry name" value="Glyco_hydro_36C"/>
    <property type="match status" value="1"/>
</dbReference>
<dbReference type="Pfam" id="PF16875">
    <property type="entry name" value="Glyco_hydro_36N"/>
    <property type="match status" value="1"/>
</dbReference>
<dbReference type="Pfam" id="PF02065">
    <property type="entry name" value="Melibiase"/>
    <property type="match status" value="1"/>
</dbReference>
<dbReference type="PIRSF" id="PIRSF005536">
    <property type="entry name" value="Agal"/>
    <property type="match status" value="1"/>
</dbReference>
<dbReference type="PRINTS" id="PR00743">
    <property type="entry name" value="GLHYDRLASE36"/>
</dbReference>
<dbReference type="SUPFAM" id="SSF51445">
    <property type="entry name" value="(Trans)glycosidases"/>
    <property type="match status" value="1"/>
</dbReference>
<comment type="function">
    <text evidence="1">Hydrolyzes a variety of simple alpha-D-galactoside as well as more complex molecules such as oligosaccharides and polysaccharides (By similarity). Not active on paranitrophenyl-alpha-galactoside and raffinose.</text>
</comment>
<comment type="catalytic activity">
    <reaction>
        <text>Hydrolysis of terminal, non-reducing alpha-D-galactose residues in alpha-D-galactosides, including galactose oligosaccharides, galactomannans and galactolipids.</text>
        <dbReference type="EC" id="3.2.1.22"/>
    </reaction>
</comment>
<comment type="cofactor">
    <cofactor evidence="1">
        <name>Mg(2+)</name>
        <dbReference type="ChEBI" id="CHEBI:18420"/>
    </cofactor>
</comment>
<comment type="cofactor">
    <cofactor evidence="1">
        <name>NAD(+)</name>
        <dbReference type="ChEBI" id="CHEBI:57540"/>
    </cofactor>
</comment>
<comment type="subunit">
    <text evidence="1">Homotetramer.</text>
</comment>
<comment type="subcellular location">
    <subcellularLocation>
        <location evidence="1">Secreted</location>
    </subcellularLocation>
</comment>
<comment type="similarity">
    <text evidence="4">Belongs to the glycosyl hydrolase 36 family.</text>
</comment>
<protein>
    <recommendedName>
        <fullName>Probable alpha-galactosidase G</fullName>
        <ecNumber>3.2.1.22</ecNumber>
    </recommendedName>
    <alternativeName>
        <fullName>Melibiase G</fullName>
    </alternativeName>
</protein>
<organism>
    <name type="scientific">Emericella nidulans (strain FGSC A4 / ATCC 38163 / CBS 112.46 / NRRL 194 / M139)</name>
    <name type="common">Aspergillus nidulans</name>
    <dbReference type="NCBI Taxonomy" id="227321"/>
    <lineage>
        <taxon>Eukaryota</taxon>
        <taxon>Fungi</taxon>
        <taxon>Dikarya</taxon>
        <taxon>Ascomycota</taxon>
        <taxon>Pezizomycotina</taxon>
        <taxon>Eurotiomycetes</taxon>
        <taxon>Eurotiomycetidae</taxon>
        <taxon>Eurotiales</taxon>
        <taxon>Aspergillaceae</taxon>
        <taxon>Aspergillus</taxon>
        <taxon>Aspergillus subgen. Nidulantes</taxon>
    </lineage>
</organism>
<name>AGALG_EMENI</name>
<evidence type="ECO:0000250" key="1"/>
<evidence type="ECO:0000250" key="2">
    <source>
        <dbReference type="UniProtKB" id="Q9ALJ4"/>
    </source>
</evidence>
<evidence type="ECO:0000255" key="3"/>
<evidence type="ECO:0000305" key="4"/>